<dbReference type="EC" id="2.5.1.7" evidence="1"/>
<dbReference type="EMBL" id="CP000090">
    <property type="protein sequence ID" value="AAZ62473.1"/>
    <property type="molecule type" value="Genomic_DNA"/>
</dbReference>
<dbReference type="SMR" id="Q46WL0"/>
<dbReference type="STRING" id="264198.Reut_A3113"/>
<dbReference type="KEGG" id="reu:Reut_A3113"/>
<dbReference type="eggNOG" id="COG0766">
    <property type="taxonomic scope" value="Bacteria"/>
</dbReference>
<dbReference type="HOGENOM" id="CLU_027387_0_0_4"/>
<dbReference type="OrthoDB" id="9803760at2"/>
<dbReference type="UniPathway" id="UPA00219"/>
<dbReference type="GO" id="GO:0005737">
    <property type="term" value="C:cytoplasm"/>
    <property type="evidence" value="ECO:0007669"/>
    <property type="project" value="UniProtKB-SubCell"/>
</dbReference>
<dbReference type="GO" id="GO:0008760">
    <property type="term" value="F:UDP-N-acetylglucosamine 1-carboxyvinyltransferase activity"/>
    <property type="evidence" value="ECO:0007669"/>
    <property type="project" value="UniProtKB-UniRule"/>
</dbReference>
<dbReference type="GO" id="GO:0051301">
    <property type="term" value="P:cell division"/>
    <property type="evidence" value="ECO:0007669"/>
    <property type="project" value="UniProtKB-KW"/>
</dbReference>
<dbReference type="GO" id="GO:0071555">
    <property type="term" value="P:cell wall organization"/>
    <property type="evidence" value="ECO:0007669"/>
    <property type="project" value="UniProtKB-KW"/>
</dbReference>
<dbReference type="GO" id="GO:0009252">
    <property type="term" value="P:peptidoglycan biosynthetic process"/>
    <property type="evidence" value="ECO:0007669"/>
    <property type="project" value="UniProtKB-UniRule"/>
</dbReference>
<dbReference type="GO" id="GO:0008360">
    <property type="term" value="P:regulation of cell shape"/>
    <property type="evidence" value="ECO:0007669"/>
    <property type="project" value="UniProtKB-KW"/>
</dbReference>
<dbReference type="GO" id="GO:0019277">
    <property type="term" value="P:UDP-N-acetylgalactosamine biosynthetic process"/>
    <property type="evidence" value="ECO:0007669"/>
    <property type="project" value="InterPro"/>
</dbReference>
<dbReference type="CDD" id="cd01555">
    <property type="entry name" value="UdpNAET"/>
    <property type="match status" value="1"/>
</dbReference>
<dbReference type="FunFam" id="3.65.10.10:FF:000002">
    <property type="entry name" value="UDP-N-acetylglucosamine 1-carboxyvinyltransferase"/>
    <property type="match status" value="1"/>
</dbReference>
<dbReference type="Gene3D" id="3.65.10.10">
    <property type="entry name" value="Enolpyruvate transferase domain"/>
    <property type="match status" value="2"/>
</dbReference>
<dbReference type="HAMAP" id="MF_00111">
    <property type="entry name" value="MurA"/>
    <property type="match status" value="1"/>
</dbReference>
<dbReference type="InterPro" id="IPR001986">
    <property type="entry name" value="Enolpyruvate_Tfrase_dom"/>
</dbReference>
<dbReference type="InterPro" id="IPR036968">
    <property type="entry name" value="Enolpyruvate_Tfrase_sf"/>
</dbReference>
<dbReference type="InterPro" id="IPR050068">
    <property type="entry name" value="MurA_subfamily"/>
</dbReference>
<dbReference type="InterPro" id="IPR013792">
    <property type="entry name" value="RNA3'P_cycl/enolpyr_Trfase_a/b"/>
</dbReference>
<dbReference type="InterPro" id="IPR005750">
    <property type="entry name" value="UDP_GlcNAc_COvinyl_MurA"/>
</dbReference>
<dbReference type="NCBIfam" id="TIGR01072">
    <property type="entry name" value="murA"/>
    <property type="match status" value="1"/>
</dbReference>
<dbReference type="NCBIfam" id="NF006873">
    <property type="entry name" value="PRK09369.1"/>
    <property type="match status" value="1"/>
</dbReference>
<dbReference type="PANTHER" id="PTHR43783">
    <property type="entry name" value="UDP-N-ACETYLGLUCOSAMINE 1-CARBOXYVINYLTRANSFERASE"/>
    <property type="match status" value="1"/>
</dbReference>
<dbReference type="PANTHER" id="PTHR43783:SF1">
    <property type="entry name" value="UDP-N-ACETYLGLUCOSAMINE 1-CARBOXYVINYLTRANSFERASE"/>
    <property type="match status" value="1"/>
</dbReference>
<dbReference type="Pfam" id="PF00275">
    <property type="entry name" value="EPSP_synthase"/>
    <property type="match status" value="1"/>
</dbReference>
<dbReference type="SUPFAM" id="SSF55205">
    <property type="entry name" value="EPT/RTPC-like"/>
    <property type="match status" value="1"/>
</dbReference>
<sequence length="416" mass="44224">MDKFQIQGNGPLKGEIRVSGAKNAALPILCAGLLTADTVTIDNVPNLQDTRTMLKLLRQMGMHAEMTGSTATLKGTDINSPEAPYELVKTMRASILVLGPLVARFGEARVSLPGGCGIGARPVDQHIKGLQAMGAEISIEHGFIHARASRLKGARVVTDMITVTGTENLLMAATLADGETVLENAAREPEVTDLANLLVKMGAKIDGIGTDRLIVQGVDKLHGATHSVVADRIEAGTFLCAAAASLGDLVLRDIPPLILDAVLIKLREAGANIETGDDWIRLSMSQRAQAVSFRTSEYPAFPTDMQAQFMALNAVAEGTARITETIFENRFMHVQELNRLGANITAEGNTAVVTGVPRLSGASVMATDLRASASLVIAGLVADGDTVIDRIYHLDRGYDRMEDKLSAVGAKIRRIA</sequence>
<organism>
    <name type="scientific">Cupriavidus pinatubonensis (strain JMP 134 / LMG 1197)</name>
    <name type="common">Cupriavidus necator (strain JMP 134)</name>
    <dbReference type="NCBI Taxonomy" id="264198"/>
    <lineage>
        <taxon>Bacteria</taxon>
        <taxon>Pseudomonadati</taxon>
        <taxon>Pseudomonadota</taxon>
        <taxon>Betaproteobacteria</taxon>
        <taxon>Burkholderiales</taxon>
        <taxon>Burkholderiaceae</taxon>
        <taxon>Cupriavidus</taxon>
    </lineage>
</organism>
<evidence type="ECO:0000255" key="1">
    <source>
        <dbReference type="HAMAP-Rule" id="MF_00111"/>
    </source>
</evidence>
<reference key="1">
    <citation type="journal article" date="2010" name="PLoS ONE">
        <title>The complete multipartite genome sequence of Cupriavidus necator JMP134, a versatile pollutant degrader.</title>
        <authorList>
            <person name="Lykidis A."/>
            <person name="Perez-Pantoja D."/>
            <person name="Ledger T."/>
            <person name="Mavromatis K."/>
            <person name="Anderson I.J."/>
            <person name="Ivanova N.N."/>
            <person name="Hooper S.D."/>
            <person name="Lapidus A."/>
            <person name="Lucas S."/>
            <person name="Gonzalez B."/>
            <person name="Kyrpides N.C."/>
        </authorList>
    </citation>
    <scope>NUCLEOTIDE SEQUENCE [LARGE SCALE GENOMIC DNA]</scope>
    <source>
        <strain>JMP134 / LMG 1197</strain>
    </source>
</reference>
<accession>Q46WL0</accession>
<keyword id="KW-0131">Cell cycle</keyword>
<keyword id="KW-0132">Cell division</keyword>
<keyword id="KW-0133">Cell shape</keyword>
<keyword id="KW-0961">Cell wall biogenesis/degradation</keyword>
<keyword id="KW-0963">Cytoplasm</keyword>
<keyword id="KW-0573">Peptidoglycan synthesis</keyword>
<keyword id="KW-0670">Pyruvate</keyword>
<keyword id="KW-0808">Transferase</keyword>
<gene>
    <name evidence="1" type="primary">murA</name>
    <name type="ordered locus">Reut_A3113</name>
</gene>
<name>MURA_CUPPJ</name>
<feature type="chain" id="PRO_0000231252" description="UDP-N-acetylglucosamine 1-carboxyvinyltransferase">
    <location>
        <begin position="1"/>
        <end position="416"/>
    </location>
</feature>
<feature type="active site" description="Proton donor" evidence="1">
    <location>
        <position position="116"/>
    </location>
</feature>
<feature type="binding site" evidence="1">
    <location>
        <begin position="22"/>
        <end position="23"/>
    </location>
    <ligand>
        <name>phosphoenolpyruvate</name>
        <dbReference type="ChEBI" id="CHEBI:58702"/>
    </ligand>
</feature>
<feature type="binding site" evidence="1">
    <location>
        <position position="92"/>
    </location>
    <ligand>
        <name>UDP-N-acetyl-alpha-D-glucosamine</name>
        <dbReference type="ChEBI" id="CHEBI:57705"/>
    </ligand>
</feature>
<feature type="binding site" evidence="1">
    <location>
        <begin position="121"/>
        <end position="125"/>
    </location>
    <ligand>
        <name>UDP-N-acetyl-alpha-D-glucosamine</name>
        <dbReference type="ChEBI" id="CHEBI:57705"/>
    </ligand>
</feature>
<feature type="binding site" evidence="1">
    <location>
        <position position="304"/>
    </location>
    <ligand>
        <name>UDP-N-acetyl-alpha-D-glucosamine</name>
        <dbReference type="ChEBI" id="CHEBI:57705"/>
    </ligand>
</feature>
<feature type="binding site" evidence="1">
    <location>
        <position position="326"/>
    </location>
    <ligand>
        <name>UDP-N-acetyl-alpha-D-glucosamine</name>
        <dbReference type="ChEBI" id="CHEBI:57705"/>
    </ligand>
</feature>
<feature type="modified residue" description="2-(S-cysteinyl)pyruvic acid O-phosphothioketal" evidence="1">
    <location>
        <position position="116"/>
    </location>
</feature>
<comment type="function">
    <text evidence="1">Cell wall formation. Adds enolpyruvyl to UDP-N-acetylglucosamine.</text>
</comment>
<comment type="catalytic activity">
    <reaction evidence="1">
        <text>phosphoenolpyruvate + UDP-N-acetyl-alpha-D-glucosamine = UDP-N-acetyl-3-O-(1-carboxyvinyl)-alpha-D-glucosamine + phosphate</text>
        <dbReference type="Rhea" id="RHEA:18681"/>
        <dbReference type="ChEBI" id="CHEBI:43474"/>
        <dbReference type="ChEBI" id="CHEBI:57705"/>
        <dbReference type="ChEBI" id="CHEBI:58702"/>
        <dbReference type="ChEBI" id="CHEBI:68483"/>
        <dbReference type="EC" id="2.5.1.7"/>
    </reaction>
</comment>
<comment type="pathway">
    <text evidence="1">Cell wall biogenesis; peptidoglycan biosynthesis.</text>
</comment>
<comment type="subcellular location">
    <subcellularLocation>
        <location evidence="1">Cytoplasm</location>
    </subcellularLocation>
</comment>
<comment type="similarity">
    <text evidence="1">Belongs to the EPSP synthase family. MurA subfamily.</text>
</comment>
<protein>
    <recommendedName>
        <fullName evidence="1">UDP-N-acetylglucosamine 1-carboxyvinyltransferase</fullName>
        <ecNumber evidence="1">2.5.1.7</ecNumber>
    </recommendedName>
    <alternativeName>
        <fullName evidence="1">Enoylpyruvate transferase</fullName>
    </alternativeName>
    <alternativeName>
        <fullName evidence="1">UDP-N-acetylglucosamine enolpyruvyl transferase</fullName>
        <shortName evidence="1">EPT</shortName>
    </alternativeName>
</protein>
<proteinExistence type="inferred from homology"/>